<gene>
    <name type="primary">mfsd5</name>
    <name type="ORF">TEgg028j23.1</name>
</gene>
<feature type="chain" id="PRO_0000273407" description="Molybdate-anion transporter">
    <location>
        <begin position="1"/>
        <end position="452"/>
    </location>
</feature>
<feature type="transmembrane region" description="Helical" evidence="2">
    <location>
        <begin position="1"/>
        <end position="21"/>
    </location>
</feature>
<feature type="transmembrane region" description="Helical" evidence="2">
    <location>
        <begin position="45"/>
        <end position="65"/>
    </location>
</feature>
<feature type="transmembrane region" description="Helical" evidence="2">
    <location>
        <begin position="79"/>
        <end position="99"/>
    </location>
</feature>
<feature type="transmembrane region" description="Helical" evidence="2">
    <location>
        <begin position="130"/>
        <end position="150"/>
    </location>
</feature>
<feature type="transmembrane region" description="Helical" evidence="2">
    <location>
        <begin position="180"/>
        <end position="200"/>
    </location>
</feature>
<feature type="transmembrane region" description="Helical" evidence="2">
    <location>
        <begin position="201"/>
        <end position="221"/>
    </location>
</feature>
<feature type="transmembrane region" description="Helical" evidence="2">
    <location>
        <begin position="251"/>
        <end position="271"/>
    </location>
</feature>
<feature type="transmembrane region" description="Helical" evidence="2">
    <location>
        <begin position="281"/>
        <end position="301"/>
    </location>
</feature>
<feature type="transmembrane region" description="Helical" evidence="2">
    <location>
        <begin position="316"/>
        <end position="336"/>
    </location>
</feature>
<feature type="transmembrane region" description="Helical" evidence="2">
    <location>
        <begin position="346"/>
        <end position="366"/>
    </location>
</feature>
<feature type="transmembrane region" description="Helical" evidence="2">
    <location>
        <begin position="377"/>
        <end position="397"/>
    </location>
</feature>
<feature type="transmembrane region" description="Helical" evidence="2">
    <location>
        <begin position="410"/>
        <end position="430"/>
    </location>
</feature>
<organism>
    <name type="scientific">Xenopus tropicalis</name>
    <name type="common">Western clawed frog</name>
    <name type="synonym">Silurana tropicalis</name>
    <dbReference type="NCBI Taxonomy" id="8364"/>
    <lineage>
        <taxon>Eukaryota</taxon>
        <taxon>Metazoa</taxon>
        <taxon>Chordata</taxon>
        <taxon>Craniata</taxon>
        <taxon>Vertebrata</taxon>
        <taxon>Euteleostomi</taxon>
        <taxon>Amphibia</taxon>
        <taxon>Batrachia</taxon>
        <taxon>Anura</taxon>
        <taxon>Pipoidea</taxon>
        <taxon>Pipidae</taxon>
        <taxon>Xenopodinae</taxon>
        <taxon>Xenopus</taxon>
        <taxon>Silurana</taxon>
    </lineage>
</organism>
<proteinExistence type="evidence at transcript level"/>
<sequence>MLLTAYFVLVGLIALWAVLEFSACHSKPSTSSNAVGNPAFRQFQYDFYRTYFPALAADWLQGPYLYKLYQHYHFLEGQIAIIYVCGFGASVFAGLVSAPLTSRLGRRKSCILFCLLLSASYLCKLSQEYFVLITGRVLGGFSSSLLFSSFEAWYTHEHAEQHDFPAEWLPHTFTRAAAWNGGIAIAAGVIANACAEWLGLGPASPSVLAVPLLVLSVALVIREWDENYGQTSSFRRVCGDGLRCLLRDRRVLLLGTIQALFESVVYIFIFLWTPVLDPHNTPLGIAFSSFMAASAAGSSLYRLATSKKYHLQPMHVLCLSILMVFFSLFMLTFSTAPGQEHPTESLLAFLLIELACGLYFPAMGFLRCRLIPEKEQIGVLNWFRVPLNLLAGLGLLVLHDSDYQSGTRNMFSLCAITMLLALLCVVSLFTMVRNDSELRLPTSETEPNGTEQ</sequence>
<accession>Q28E13</accession>
<reference key="1">
    <citation type="submission" date="2006-10" db="EMBL/GenBank/DDBJ databases">
        <authorList>
            <consortium name="Sanger Xenopus tropicalis EST/cDNA project"/>
        </authorList>
    </citation>
    <scope>NUCLEOTIDE SEQUENCE [LARGE SCALE MRNA]</scope>
    <source>
        <tissue>Egg</tissue>
    </source>
</reference>
<dbReference type="EMBL" id="CR848498">
    <property type="protein sequence ID" value="CAJ82274.1"/>
    <property type="molecule type" value="mRNA"/>
</dbReference>
<dbReference type="RefSeq" id="NP_001015939.1">
    <property type="nucleotide sequence ID" value="NM_001015939.2"/>
</dbReference>
<dbReference type="SMR" id="Q28E13"/>
<dbReference type="FunCoup" id="Q28E13">
    <property type="interactions" value="547"/>
</dbReference>
<dbReference type="STRING" id="8364.ENSXETP00000022260"/>
<dbReference type="TCDB" id="2.A.1.40.3">
    <property type="family name" value="the major facilitator superfamily (mfs)"/>
</dbReference>
<dbReference type="PaxDb" id="8364-ENSXETP00000027721"/>
<dbReference type="GeneID" id="548693"/>
<dbReference type="KEGG" id="xtr:548693"/>
<dbReference type="AGR" id="Xenbase:XB-GENE-967131"/>
<dbReference type="CTD" id="84975"/>
<dbReference type="Xenbase" id="XB-GENE-967131">
    <property type="gene designation" value="mfsd5"/>
</dbReference>
<dbReference type="eggNOG" id="KOG4332">
    <property type="taxonomic scope" value="Eukaryota"/>
</dbReference>
<dbReference type="HOGENOM" id="CLU_034007_2_0_1"/>
<dbReference type="InParanoid" id="Q28E13"/>
<dbReference type="OMA" id="CCGWVVL"/>
<dbReference type="OrthoDB" id="263957at2759"/>
<dbReference type="PhylomeDB" id="Q28E13"/>
<dbReference type="TreeFam" id="TF328562"/>
<dbReference type="Proteomes" id="UP000008143">
    <property type="component" value="Chromosome 2"/>
</dbReference>
<dbReference type="Bgee" id="ENSXETG00000012669">
    <property type="expression patterns" value="Expressed in egg cell and 12 other cell types or tissues"/>
</dbReference>
<dbReference type="ExpressionAtlas" id="Q28E13">
    <property type="expression patterns" value="baseline and differential"/>
</dbReference>
<dbReference type="GO" id="GO:0005886">
    <property type="term" value="C:plasma membrane"/>
    <property type="evidence" value="ECO:0007669"/>
    <property type="project" value="UniProtKB-SubCell"/>
</dbReference>
<dbReference type="GO" id="GO:0015098">
    <property type="term" value="F:molybdate ion transmembrane transporter activity"/>
    <property type="evidence" value="ECO:0007669"/>
    <property type="project" value="InterPro"/>
</dbReference>
<dbReference type="GO" id="GO:0006811">
    <property type="term" value="P:monoatomic ion transport"/>
    <property type="evidence" value="ECO:0007669"/>
    <property type="project" value="UniProtKB-KW"/>
</dbReference>
<dbReference type="CDD" id="cd17487">
    <property type="entry name" value="MFS_MFSD5_like"/>
    <property type="match status" value="1"/>
</dbReference>
<dbReference type="Gene3D" id="1.20.1250.20">
    <property type="entry name" value="MFS general substrate transporter like domains"/>
    <property type="match status" value="1"/>
</dbReference>
<dbReference type="InterPro" id="IPR036259">
    <property type="entry name" value="MFS_trans_sf"/>
</dbReference>
<dbReference type="InterPro" id="IPR008509">
    <property type="entry name" value="MOT2/MFSD5"/>
</dbReference>
<dbReference type="PANTHER" id="PTHR23516:SF1">
    <property type="entry name" value="MOLYBDATE-ANION TRANSPORTER"/>
    <property type="match status" value="1"/>
</dbReference>
<dbReference type="PANTHER" id="PTHR23516">
    <property type="entry name" value="SAM (S-ADENOSYL METHIONINE) TRANSPORTER"/>
    <property type="match status" value="1"/>
</dbReference>
<dbReference type="Pfam" id="PF05631">
    <property type="entry name" value="MFS_5"/>
    <property type="match status" value="1"/>
</dbReference>
<dbReference type="SUPFAM" id="SSF103473">
    <property type="entry name" value="MFS general substrate transporter"/>
    <property type="match status" value="1"/>
</dbReference>
<keyword id="KW-1003">Cell membrane</keyword>
<keyword id="KW-0406">Ion transport</keyword>
<keyword id="KW-0472">Membrane</keyword>
<keyword id="KW-1185">Reference proteome</keyword>
<keyword id="KW-0812">Transmembrane</keyword>
<keyword id="KW-1133">Transmembrane helix</keyword>
<keyword id="KW-0813">Transport</keyword>
<protein>
    <recommendedName>
        <fullName>Molybdate-anion transporter</fullName>
    </recommendedName>
    <alternativeName>
        <fullName>Major facilitator superfamily domain-containing protein 5</fullName>
    </alternativeName>
    <alternativeName>
        <fullName>Molybdate transporter 2 homolog</fullName>
    </alternativeName>
</protein>
<evidence type="ECO:0000250" key="1"/>
<evidence type="ECO:0000255" key="2"/>
<evidence type="ECO:0000305" key="3"/>
<comment type="function">
    <text evidence="1">Mediates high-affinity intracellular uptake of the rare oligo-element molybdenum.</text>
</comment>
<comment type="subcellular location">
    <subcellularLocation>
        <location evidence="1">Cell membrane</location>
        <topology evidence="1">Multi-pass membrane protein</topology>
    </subcellularLocation>
</comment>
<comment type="similarity">
    <text evidence="3">Belongs to the major facilitator superfamily.</text>
</comment>
<name>MFSD5_XENTR</name>